<keyword id="KW-0233">DNA recombination</keyword>
<keyword id="KW-0238">DNA-binding</keyword>
<keyword id="KW-1185">Reference proteome</keyword>
<keyword id="KW-0804">Transcription</keyword>
<keyword id="KW-0805">Transcription regulation</keyword>
<keyword id="KW-0810">Translation regulation</keyword>
<gene>
    <name type="primary">ihfA</name>
    <name type="synonym">himA</name>
    <name type="ordered locus">VC_1222</name>
</gene>
<feature type="chain" id="PRO_0000105029" description="Integration host factor subunit alpha">
    <location>
        <begin position="1"/>
        <end position="98"/>
    </location>
</feature>
<feature type="region of interest" description="Disordered" evidence="2">
    <location>
        <begin position="51"/>
        <end position="71"/>
    </location>
</feature>
<feature type="compositionally biased region" description="Basic and acidic residues" evidence="2">
    <location>
        <begin position="53"/>
        <end position="69"/>
    </location>
</feature>
<name>IHFA_VIBCH</name>
<organism>
    <name type="scientific">Vibrio cholerae serotype O1 (strain ATCC 39315 / El Tor Inaba N16961)</name>
    <dbReference type="NCBI Taxonomy" id="243277"/>
    <lineage>
        <taxon>Bacteria</taxon>
        <taxon>Pseudomonadati</taxon>
        <taxon>Pseudomonadota</taxon>
        <taxon>Gammaproteobacteria</taxon>
        <taxon>Vibrionales</taxon>
        <taxon>Vibrionaceae</taxon>
        <taxon>Vibrio</taxon>
    </lineage>
</organism>
<comment type="function">
    <text evidence="1">This protein is one of the two subunits of integration host factor, a specific DNA-binding protein that functions in genetic recombination as well as in transcriptional and translational control.</text>
</comment>
<comment type="subunit">
    <text evidence="1">Heterodimer of an alpha and a beta chain.</text>
</comment>
<comment type="similarity">
    <text evidence="3">Belongs to the bacterial histone-like protein family.</text>
</comment>
<accession>Q9KSN4</accession>
<sequence length="98" mass="11120">MALTKAELAEALFEQLGMSKRDAKDTVEVFFEEIRKALESGEQVKLSGFGNFDLRDKNERPGRNPKTGEDIPITARRVVTFRPGQKLKARVENIKVEK</sequence>
<evidence type="ECO:0000250" key="1"/>
<evidence type="ECO:0000256" key="2">
    <source>
        <dbReference type="SAM" id="MobiDB-lite"/>
    </source>
</evidence>
<evidence type="ECO:0000305" key="3"/>
<reference key="1">
    <citation type="journal article" date="2000" name="Nature">
        <title>DNA sequence of both chromosomes of the cholera pathogen Vibrio cholerae.</title>
        <authorList>
            <person name="Heidelberg J.F."/>
            <person name="Eisen J.A."/>
            <person name="Nelson W.C."/>
            <person name="Clayton R.A."/>
            <person name="Gwinn M.L."/>
            <person name="Dodson R.J."/>
            <person name="Haft D.H."/>
            <person name="Hickey E.K."/>
            <person name="Peterson J.D."/>
            <person name="Umayam L.A."/>
            <person name="Gill S.R."/>
            <person name="Nelson K.E."/>
            <person name="Read T.D."/>
            <person name="Tettelin H."/>
            <person name="Richardson D.L."/>
            <person name="Ermolaeva M.D."/>
            <person name="Vamathevan J.J."/>
            <person name="Bass S."/>
            <person name="Qin H."/>
            <person name="Dragoi I."/>
            <person name="Sellers P."/>
            <person name="McDonald L.A."/>
            <person name="Utterback T.R."/>
            <person name="Fleischmann R.D."/>
            <person name="Nierman W.C."/>
            <person name="White O."/>
            <person name="Salzberg S.L."/>
            <person name="Smith H.O."/>
            <person name="Colwell R.R."/>
            <person name="Mekalanos J.J."/>
            <person name="Venter J.C."/>
            <person name="Fraser C.M."/>
        </authorList>
    </citation>
    <scope>NUCLEOTIDE SEQUENCE [LARGE SCALE GENOMIC DNA]</scope>
    <source>
        <strain>ATCC 39315 / El Tor Inaba N16961</strain>
    </source>
</reference>
<proteinExistence type="inferred from homology"/>
<protein>
    <recommendedName>
        <fullName>Integration host factor subunit alpha</fullName>
        <shortName>IHF-alpha</shortName>
    </recommendedName>
</protein>
<dbReference type="EMBL" id="AE003852">
    <property type="protein sequence ID" value="AAF94381.1"/>
    <property type="molecule type" value="Genomic_DNA"/>
</dbReference>
<dbReference type="PIR" id="F82225">
    <property type="entry name" value="F82225"/>
</dbReference>
<dbReference type="RefSeq" id="NP_230867.1">
    <property type="nucleotide sequence ID" value="NC_002505.1"/>
</dbReference>
<dbReference type="RefSeq" id="WP_001229260.1">
    <property type="nucleotide sequence ID" value="NZ_LT906614.1"/>
</dbReference>
<dbReference type="SMR" id="Q9KSN4"/>
<dbReference type="STRING" id="243277.VC_1222"/>
<dbReference type="DNASU" id="2614659"/>
<dbReference type="EnsemblBacteria" id="AAF94381">
    <property type="protein sequence ID" value="AAF94381"/>
    <property type="gene ID" value="VC_1222"/>
</dbReference>
<dbReference type="GeneID" id="88785345"/>
<dbReference type="KEGG" id="vch:VC_1222"/>
<dbReference type="PATRIC" id="fig|243277.26.peg.1168"/>
<dbReference type="eggNOG" id="COG0776">
    <property type="taxonomic scope" value="Bacteria"/>
</dbReference>
<dbReference type="HOGENOM" id="CLU_105066_1_3_6"/>
<dbReference type="Proteomes" id="UP000000584">
    <property type="component" value="Chromosome 1"/>
</dbReference>
<dbReference type="GO" id="GO:0005829">
    <property type="term" value="C:cytosol"/>
    <property type="evidence" value="ECO:0000318"/>
    <property type="project" value="GO_Central"/>
</dbReference>
<dbReference type="GO" id="GO:0003677">
    <property type="term" value="F:DNA binding"/>
    <property type="evidence" value="ECO:0000318"/>
    <property type="project" value="GO_Central"/>
</dbReference>
<dbReference type="GO" id="GO:0030527">
    <property type="term" value="F:structural constituent of chromatin"/>
    <property type="evidence" value="ECO:0007669"/>
    <property type="project" value="InterPro"/>
</dbReference>
<dbReference type="GO" id="GO:0006310">
    <property type="term" value="P:DNA recombination"/>
    <property type="evidence" value="ECO:0007669"/>
    <property type="project" value="UniProtKB-UniRule"/>
</dbReference>
<dbReference type="GO" id="GO:0009893">
    <property type="term" value="P:positive regulation of metabolic process"/>
    <property type="evidence" value="ECO:0007669"/>
    <property type="project" value="UniProtKB-ARBA"/>
</dbReference>
<dbReference type="GO" id="GO:0006355">
    <property type="term" value="P:regulation of DNA-templated transcription"/>
    <property type="evidence" value="ECO:0007669"/>
    <property type="project" value="UniProtKB-UniRule"/>
</dbReference>
<dbReference type="GO" id="GO:0006417">
    <property type="term" value="P:regulation of translation"/>
    <property type="evidence" value="ECO:0007669"/>
    <property type="project" value="UniProtKB-UniRule"/>
</dbReference>
<dbReference type="CDD" id="cd13835">
    <property type="entry name" value="IHF_A"/>
    <property type="match status" value="1"/>
</dbReference>
<dbReference type="FunFam" id="4.10.520.10:FF:000002">
    <property type="entry name" value="Integration host factor subunit alpha"/>
    <property type="match status" value="1"/>
</dbReference>
<dbReference type="Gene3D" id="4.10.520.10">
    <property type="entry name" value="IHF-like DNA-binding proteins"/>
    <property type="match status" value="1"/>
</dbReference>
<dbReference type="HAMAP" id="MF_00380">
    <property type="entry name" value="IHF_alpha"/>
    <property type="match status" value="1"/>
</dbReference>
<dbReference type="InterPro" id="IPR000119">
    <property type="entry name" value="Hist_DNA-bd"/>
</dbReference>
<dbReference type="InterPro" id="IPR020816">
    <property type="entry name" value="Histone-like_DNA-bd_CS"/>
</dbReference>
<dbReference type="InterPro" id="IPR010992">
    <property type="entry name" value="IHF-like_DNA-bd_dom_sf"/>
</dbReference>
<dbReference type="InterPro" id="IPR005684">
    <property type="entry name" value="IHF_alpha"/>
</dbReference>
<dbReference type="NCBIfam" id="TIGR00987">
    <property type="entry name" value="himA"/>
    <property type="match status" value="1"/>
</dbReference>
<dbReference type="NCBIfam" id="NF001401">
    <property type="entry name" value="PRK00285.1"/>
    <property type="match status" value="1"/>
</dbReference>
<dbReference type="PANTHER" id="PTHR33175">
    <property type="entry name" value="DNA-BINDING PROTEIN HU"/>
    <property type="match status" value="1"/>
</dbReference>
<dbReference type="PANTHER" id="PTHR33175:SF2">
    <property type="entry name" value="INTEGRATION HOST FACTOR SUBUNIT ALPHA"/>
    <property type="match status" value="1"/>
</dbReference>
<dbReference type="Pfam" id="PF00216">
    <property type="entry name" value="Bac_DNA_binding"/>
    <property type="match status" value="1"/>
</dbReference>
<dbReference type="PRINTS" id="PR01727">
    <property type="entry name" value="DNABINDINGHU"/>
</dbReference>
<dbReference type="SMART" id="SM00411">
    <property type="entry name" value="BHL"/>
    <property type="match status" value="1"/>
</dbReference>
<dbReference type="SUPFAM" id="SSF47729">
    <property type="entry name" value="IHF-like DNA-binding proteins"/>
    <property type="match status" value="1"/>
</dbReference>
<dbReference type="PROSITE" id="PS00045">
    <property type="entry name" value="HISTONE_LIKE"/>
    <property type="match status" value="1"/>
</dbReference>